<sequence length="196" mass="22124">MPIGVPKVPFRSPGEGDTSWVDIYNRLYRERLFFLGQEVDTEISNQLISLMIYLSIEKDTKDLYLFINSPGGWVISGMAIYDTMQFVRPDVQTICMGLAASIASFILVGGAITKRIAFPHARVMIHQPASSFYEAQTGEFILEAEELLKLRETITRVYVQRTGKPIWVISEDMERDVFMSATEAQAYGIVDLVAVQ</sequence>
<name>CLPP1_ARATH</name>
<evidence type="ECO:0000255" key="1">
    <source>
        <dbReference type="HAMAP-Rule" id="MF_00444"/>
    </source>
</evidence>
<evidence type="ECO:0000269" key="2">
    <source>
    </source>
</evidence>
<evidence type="ECO:0000269" key="3">
    <source>
    </source>
</evidence>
<evidence type="ECO:0000269" key="4">
    <source>
    </source>
</evidence>
<evidence type="ECO:0000269" key="5">
    <source>
    </source>
</evidence>
<evidence type="ECO:0000269" key="6">
    <source>
    </source>
</evidence>
<evidence type="ECO:0000269" key="7">
    <source>
    </source>
</evidence>
<evidence type="ECO:0000269" key="8">
    <source>
    </source>
</evidence>
<evidence type="ECO:0000269" key="9">
    <source>
    </source>
</evidence>
<evidence type="ECO:0000269" key="10">
    <source>
    </source>
</evidence>
<evidence type="ECO:0000303" key="11">
    <source>
    </source>
</evidence>
<evidence type="ECO:0000312" key="12">
    <source>
        <dbReference type="Araport" id="ATCG00670"/>
    </source>
</evidence>
<dbReference type="EC" id="3.4.21.92" evidence="1"/>
<dbReference type="EMBL" id="AP000423">
    <property type="protein sequence ID" value="BAA84410.1"/>
    <property type="status" value="ALT_SEQ"/>
    <property type="molecule type" value="Genomic_DNA"/>
</dbReference>
<dbReference type="EMBL" id="AB022325">
    <property type="protein sequence ID" value="BAA82063.1"/>
    <property type="status" value="ALT_SEQ"/>
    <property type="molecule type" value="Genomic_DNA"/>
</dbReference>
<dbReference type="EMBL" id="AJ971664">
    <property type="protein sequence ID" value="CAI99002.1"/>
    <property type="status" value="ALT_SEQ"/>
    <property type="molecule type" value="Genomic_DNA"/>
</dbReference>
<dbReference type="EMBL" id="AJ971665">
    <property type="protein sequence ID" value="CAI99003.1"/>
    <property type="status" value="ALT_SEQ"/>
    <property type="molecule type" value="Genomic_DNA"/>
</dbReference>
<dbReference type="RefSeq" id="NP_051083.1">
    <property type="nucleotide sequence ID" value="NC_000932.1"/>
</dbReference>
<dbReference type="SMR" id="P56772"/>
<dbReference type="BioGRID" id="29940">
    <property type="interactions" value="7"/>
</dbReference>
<dbReference type="FunCoup" id="P56772">
    <property type="interactions" value="10"/>
</dbReference>
<dbReference type="IntAct" id="P56772">
    <property type="interactions" value="10"/>
</dbReference>
<dbReference type="STRING" id="3702.P56772"/>
<dbReference type="MEROPS" id="S14.002"/>
<dbReference type="PaxDb" id="3702-ATCG00670.1"/>
<dbReference type="ProteomicsDB" id="246657"/>
<dbReference type="GeneID" id="844734"/>
<dbReference type="KEGG" id="ath:ArthCp048"/>
<dbReference type="Araport" id="ATCG00670"/>
<dbReference type="TAIR" id="ATCG00670"/>
<dbReference type="eggNOG" id="KOG0840">
    <property type="taxonomic scope" value="Eukaryota"/>
</dbReference>
<dbReference type="HOGENOM" id="CLU_058707_4_2_1"/>
<dbReference type="InParanoid" id="P56772"/>
<dbReference type="BRENDA" id="3.4.21.92">
    <property type="organism ID" value="399"/>
</dbReference>
<dbReference type="PRO" id="PR:P56772"/>
<dbReference type="Proteomes" id="UP000006548">
    <property type="component" value="Chloroplast Pltd"/>
</dbReference>
<dbReference type="ExpressionAtlas" id="P56772">
    <property type="expression patterns" value="baseline and differential"/>
</dbReference>
<dbReference type="GO" id="GO:0009570">
    <property type="term" value="C:chloroplast stroma"/>
    <property type="evidence" value="ECO:0007669"/>
    <property type="project" value="UniProtKB-SubCell"/>
</dbReference>
<dbReference type="GO" id="GO:0009368">
    <property type="term" value="C:endopeptidase Clp complex"/>
    <property type="evidence" value="ECO:0000318"/>
    <property type="project" value="GO_Central"/>
</dbReference>
<dbReference type="GO" id="GO:0004176">
    <property type="term" value="F:ATP-dependent peptidase activity"/>
    <property type="evidence" value="ECO:0000318"/>
    <property type="project" value="GO_Central"/>
</dbReference>
<dbReference type="GO" id="GO:0051117">
    <property type="term" value="F:ATPase binding"/>
    <property type="evidence" value="ECO:0000318"/>
    <property type="project" value="GO_Central"/>
</dbReference>
<dbReference type="GO" id="GO:0004252">
    <property type="term" value="F:serine-type endopeptidase activity"/>
    <property type="evidence" value="ECO:0000318"/>
    <property type="project" value="GO_Central"/>
</dbReference>
<dbReference type="GO" id="GO:0006515">
    <property type="term" value="P:protein quality control for misfolded or incompletely synthesized proteins"/>
    <property type="evidence" value="ECO:0000318"/>
    <property type="project" value="GO_Central"/>
</dbReference>
<dbReference type="CDD" id="cd07017">
    <property type="entry name" value="S14_ClpP_2"/>
    <property type="match status" value="1"/>
</dbReference>
<dbReference type="FunFam" id="3.90.226.10:FF:000006">
    <property type="entry name" value="ATP-dependent Clp protease proteolytic subunit"/>
    <property type="match status" value="1"/>
</dbReference>
<dbReference type="Gene3D" id="3.90.226.10">
    <property type="entry name" value="2-enoyl-CoA Hydratase, Chain A, domain 1"/>
    <property type="match status" value="1"/>
</dbReference>
<dbReference type="HAMAP" id="MF_00444">
    <property type="entry name" value="ClpP"/>
    <property type="match status" value="1"/>
</dbReference>
<dbReference type="InterPro" id="IPR001907">
    <property type="entry name" value="ClpP"/>
</dbReference>
<dbReference type="InterPro" id="IPR029045">
    <property type="entry name" value="ClpP/crotonase-like_dom_sf"/>
</dbReference>
<dbReference type="InterPro" id="IPR023562">
    <property type="entry name" value="ClpP/TepA"/>
</dbReference>
<dbReference type="InterPro" id="IPR033135">
    <property type="entry name" value="ClpP_His_AS"/>
</dbReference>
<dbReference type="PANTHER" id="PTHR10381">
    <property type="entry name" value="ATP-DEPENDENT CLP PROTEASE PROTEOLYTIC SUBUNIT"/>
    <property type="match status" value="1"/>
</dbReference>
<dbReference type="PANTHER" id="PTHR10381:SF15">
    <property type="entry name" value="CHLOROPLASTIC ATP-DEPENDENT CLP PROTEASE PROTEOLYTIC SUBUNIT 1"/>
    <property type="match status" value="1"/>
</dbReference>
<dbReference type="Pfam" id="PF00574">
    <property type="entry name" value="CLP_protease"/>
    <property type="match status" value="1"/>
</dbReference>
<dbReference type="PRINTS" id="PR00127">
    <property type="entry name" value="CLPPROTEASEP"/>
</dbReference>
<dbReference type="SUPFAM" id="SSF52096">
    <property type="entry name" value="ClpP/crotonase"/>
    <property type="match status" value="1"/>
</dbReference>
<dbReference type="PROSITE" id="PS00382">
    <property type="entry name" value="CLP_PROTEASE_HIS"/>
    <property type="match status" value="1"/>
</dbReference>
<comment type="function">
    <text evidence="1">Cleaves peptides in various proteins in a process that requires ATP hydrolysis. Has a chymotrypsin-like activity. Plays a major role in the degradation of misfolded proteins.</text>
</comment>
<comment type="catalytic activity">
    <reaction evidence="1">
        <text>Hydrolysis of proteins to small peptides in the presence of ATP and magnesium. alpha-casein is the usual test substrate. In the absence of ATP, only oligopeptides shorter than five residues are hydrolyzed (such as succinyl-Leu-Tyr-|-NHMec, and Leu-Tyr-Leu-|-Tyr-Trp, in which cleavage of the -Tyr-|-Leu- and -Tyr-|-Trp bonds also occurs).</text>
        <dbReference type="EC" id="3.4.21.92"/>
    </reaction>
</comment>
<comment type="subunit">
    <text evidence="1 3 6 8 9 10">Component of the chloroplastic Clp protease core complex which consist of at least 16 proteins: CLPP4 (3 copies), CLPP5 (3 copies), CLPR4 (2 copies), ClpP1 (1 copy), CLPP6 (1 copy), CLPR2 (1 copy), CLPT1 (1 copy), CLPT2 (1 copy) and 3 copies of CLPP3 and/or CLPR1 and/or CLPR3 (PubMed:11278690, PubMed:14593120, PubMed:16766689, PubMed:16980539). The core complex is organized in two heptameric rings, one containing CLPP3,4,5,6 in a 1:2:3:1 ratio and the other CLPP1 and CLPR1,2,3,4 in a 3:1:1:1:1 ratio (PubMed:21712416).</text>
</comment>
<comment type="subcellular location">
    <subcellularLocation>
        <location evidence="2 4 5 6">Plastid</location>
        <location evidence="2 4 5 6">Chloroplast stroma</location>
    </subcellularLocation>
</comment>
<comment type="tissue specificity">
    <text evidence="5">Mostly expressed in leaves. Also detected in stems, and to a lower extent, in roots (at protein level).</text>
</comment>
<comment type="induction">
    <text evidence="2 5">Repressed in darkness. Slightly induced by high light stress and during cold acclimation (at protein level).</text>
</comment>
<comment type="RNA editing">
    <location>
        <position position="187" evidence="7"/>
    </location>
</comment>
<comment type="similarity">
    <text evidence="1">Belongs to the peptidase S14 family.</text>
</comment>
<feature type="chain" id="PRO_0000179734" description="Chloroplastic ATP-dependent Clp protease proteolytic subunit 1">
    <location>
        <begin position="1"/>
        <end position="196"/>
    </location>
</feature>
<feature type="active site" description="Nucleophile" evidence="1">
    <location>
        <position position="101"/>
    </location>
</feature>
<feature type="active site" evidence="1">
    <location>
        <position position="126"/>
    </location>
</feature>
<accession>P56772</accession>
<accession>Q3ZVD5</accession>
<accession>Q9XQZ9</accession>
<proteinExistence type="evidence at protein level"/>
<reference key="1">
    <citation type="journal article" date="1999" name="DNA Res.">
        <title>Complete structure of the chloroplast genome of Arabidopsis thaliana.</title>
        <authorList>
            <person name="Sato S."/>
            <person name="Nakamura Y."/>
            <person name="Kaneko T."/>
            <person name="Asamizu E."/>
            <person name="Tabata S."/>
        </authorList>
    </citation>
    <scope>NUCLEOTIDE SEQUENCE [LARGE SCALE GENOMIC DNA]</scope>
    <source>
        <strain>cv. Columbia</strain>
    </source>
</reference>
<reference key="2">
    <citation type="journal article" date="1999" name="Plant Cell Physiol.">
        <title>Identification of clp genes expressed in senescing Arabidopsis leaves.</title>
        <authorList>
            <person name="Nakabayashi K."/>
            <person name="Ito M."/>
            <person name="Kiyosue T."/>
            <person name="Shinozaki K."/>
            <person name="Watanabe A."/>
        </authorList>
    </citation>
    <scope>NUCLEOTIDE SEQUENCE [GENOMIC DNA]</scope>
    <scope>SUBCELLULAR LOCATION</scope>
    <scope>INDUCTION</scope>
    <source>
        <strain>cv. Columbia</strain>
    </source>
</reference>
<reference key="3">
    <citation type="journal article" date="2001" name="J. Biol. Chem.">
        <title>Identification of a 350-kDa ClpP protease complex with 10 different Clp isoforms in chloroplasts of Arabidopsis thaliana.</title>
        <authorList>
            <person name="Peltier J.-B."/>
            <person name="Ytterberg J."/>
            <person name="Liberles D.A."/>
            <person name="Roepstorff P."/>
            <person name="van Wijk K.J."/>
        </authorList>
    </citation>
    <scope>PROTEIN SEQUENCE OF 12-26 AND 123-149</scope>
    <scope>SUBUNIT</scope>
    <scope>IDENTIFICATION BY MASS SPECTROMETRY</scope>
</reference>
<reference key="4">
    <citation type="journal article" date="2001" name="Plant Mol. Biol.">
        <title>Plant mitochondria contain proteolytic and regulatory subunits of the ATP-dependent Clp protease.</title>
        <authorList>
            <person name="Halperin T."/>
            <person name="Zheng B."/>
            <person name="Itzhaki H."/>
            <person name="Clarke A.K."/>
            <person name="Adam Z."/>
        </authorList>
    </citation>
    <scope>SUBCELLULAR LOCATION</scope>
</reference>
<reference key="5">
    <citation type="journal article" date="2005" name="Plant J.">
        <title>Editing of plastid RNA in Arabidopsis thaliana ecotypes.</title>
        <authorList>
            <person name="Tillich M."/>
            <person name="Funk H.T."/>
            <person name="Schmitz-Linneweber C."/>
            <person name="Poltnigg P."/>
            <person name="Sabater B."/>
            <person name="Martin M."/>
            <person name="Maier R.M."/>
        </authorList>
    </citation>
    <scope>NUCLEOTIDE SEQUENCE [GENOMIC DNA] OF 133-195</scope>
    <scope>RNA EDITING</scope>
    <source>
        <strain>cv. Cvi-0</strain>
        <strain>cv. Wassilewskija</strain>
    </source>
</reference>
<reference key="6">
    <citation type="journal article" date="2001" name="Plant Physiol.">
        <title>Chloroplast and mitochondrial proteases in Arabidopsis. A proposed nomenclature.</title>
        <authorList>
            <person name="Adam Z."/>
            <person name="Adamska I."/>
            <person name="Nakabayashi K."/>
            <person name="Ostersetzer O."/>
            <person name="Haussuhl K."/>
            <person name="Manuell A."/>
            <person name="Zheng B."/>
            <person name="Vallon O."/>
            <person name="Rodermel S.R."/>
            <person name="Shinozaki K."/>
            <person name="Clarke A.K."/>
        </authorList>
    </citation>
    <scope>GENE FAMILY</scope>
    <scope>NOMENCLATURE</scope>
</reference>
<reference key="7">
    <citation type="journal article" date="2002" name="Physiol. Plantarum">
        <title>Characterization of chloroplast Clp proteins in Arabidopsis: localization, tissue specificity and stress responses.</title>
        <authorList>
            <person name="Zheng B."/>
            <person name="Halperin T."/>
            <person name="Hruskova-Heidingsfeldova O."/>
            <person name="Adam Z."/>
            <person name="Clarke A.K."/>
        </authorList>
    </citation>
    <scope>SUBCELLULAR LOCATION</scope>
    <scope>INDUCTION</scope>
    <scope>TISSUE SPECIFICITY</scope>
    <source>
        <strain>cv. Columbia</strain>
        <tissue>Seedling</tissue>
    </source>
</reference>
<reference key="8">
    <citation type="journal article" date="2005" name="Physiol. Plantarum">
        <title>The ATP-dependent Clp protease in chloroplasts of higher plants.</title>
        <authorList>
            <person name="Clarke A.K."/>
            <person name="MacDonald T.M."/>
            <person name="Sjoegren L.L."/>
        </authorList>
    </citation>
    <scope>NOMENCLATURE</scope>
</reference>
<reference key="9">
    <citation type="journal article" date="2006" name="Plant Cell">
        <title>Downregulation of ClpR2 leads to reduced accumulation of the ClpPRS protease complex and defects in chloroplast biogenesis in Arabidopsis.</title>
        <authorList>
            <person name="Rudella A."/>
            <person name="Friso G."/>
            <person name="Alonso J.M."/>
            <person name="Ecker J.R."/>
            <person name="van Wijk K.J."/>
        </authorList>
    </citation>
    <scope>IDENTIFICATION BY MASS SPECTROMETRY</scope>
    <scope>SUBUNIT</scope>
</reference>
<reference key="10">
    <citation type="journal article" date="2006" name="Plant Cell">
        <title>Structural and functional insights into the chloroplast ATP-dependent Clp protease in Arabidopsis.</title>
        <authorList>
            <person name="Sjoegren L.L.E."/>
            <person name="Stanne T.M."/>
            <person name="Zheng B."/>
            <person name="Sutinen S."/>
            <person name="Clarke A.K."/>
        </authorList>
    </citation>
    <scope>SUBUNIT</scope>
</reference>
<reference key="11">
    <citation type="journal article" date="2004" name="J. Biol. Chem.">
        <title>Clp protease complexes from photosynthetic and non-photosynthetic plastids and mitochondria of plants, their predicted three-dimensional structures, and functional implications.</title>
        <authorList>
            <person name="Peltier J.-B."/>
            <person name="Ripoll D.R."/>
            <person name="Friso G."/>
            <person name="Rudella A."/>
            <person name="Cai Y."/>
            <person name="Ytterberg J."/>
            <person name="Giacomelli L."/>
            <person name="Pillardy J."/>
            <person name="van Wijk K.J."/>
        </authorList>
    </citation>
    <scope>3D-STRUCTURE MODELING</scope>
    <scope>IDENTIFICATION BY MASS SPECTROMETRY</scope>
    <scope>SUBUNIT</scope>
    <scope>SUBCELLULAR LOCATION</scope>
</reference>
<reference key="12">
    <citation type="journal article" date="2011" name="Plant Cell">
        <title>Subunit stoichiometry, evolution, and functional implications of an asymmetric plant plastid ClpP/R protease complex in Arabidopsis.</title>
        <authorList>
            <person name="Olinares P.D."/>
            <person name="Kim J."/>
            <person name="Davis J.I."/>
            <person name="van Wijk K.J."/>
        </authorList>
    </citation>
    <scope>IDENTIFICATION BY MASS SPECTROMETRY</scope>
    <scope>SUBUNIT</scope>
</reference>
<reference key="13">
    <citation type="journal article" date="2012" name="Physiol. Plantarum">
        <title>The chloroplast ATP-dependent Clp protease in vascular plants - new dimensions and future challenges.</title>
        <authorList>
            <person name="Clarke A.K."/>
        </authorList>
    </citation>
    <scope>REVIEW</scope>
</reference>
<gene>
    <name evidence="11" type="primary">clpP1</name>
    <name type="synonym">ClpP</name>
    <name evidence="12" type="ordered locus">AtCg00670</name>
</gene>
<organism>
    <name type="scientific">Arabidopsis thaliana</name>
    <name type="common">Mouse-ear cress</name>
    <dbReference type="NCBI Taxonomy" id="3702"/>
    <lineage>
        <taxon>Eukaryota</taxon>
        <taxon>Viridiplantae</taxon>
        <taxon>Streptophyta</taxon>
        <taxon>Embryophyta</taxon>
        <taxon>Tracheophyta</taxon>
        <taxon>Spermatophyta</taxon>
        <taxon>Magnoliopsida</taxon>
        <taxon>eudicotyledons</taxon>
        <taxon>Gunneridae</taxon>
        <taxon>Pentapetalae</taxon>
        <taxon>rosids</taxon>
        <taxon>malvids</taxon>
        <taxon>Brassicales</taxon>
        <taxon>Brassicaceae</taxon>
        <taxon>Camelineae</taxon>
        <taxon>Arabidopsis</taxon>
    </lineage>
</organism>
<geneLocation type="chloroplast"/>
<protein>
    <recommendedName>
        <fullName evidence="11">Chloroplastic ATP-dependent Clp protease proteolytic subunit 1</fullName>
        <ecNumber evidence="1">3.4.21.92</ecNumber>
    </recommendedName>
    <alternativeName>
        <fullName evidence="11">Endopeptidase ClpP1</fullName>
        <shortName>pClpP</shortName>
    </alternativeName>
</protein>
<keyword id="KW-0150">Chloroplast</keyword>
<keyword id="KW-0903">Direct protein sequencing</keyword>
<keyword id="KW-0378">Hydrolase</keyword>
<keyword id="KW-0934">Plastid</keyword>
<keyword id="KW-0645">Protease</keyword>
<keyword id="KW-1185">Reference proteome</keyword>
<keyword id="KW-0691">RNA editing</keyword>
<keyword id="KW-0720">Serine protease</keyword>